<gene>
    <name evidence="6" type="primary">PexRD21</name>
    <name evidence="5" type="synonym">CRE1</name>
    <name type="ORF">PITG_00821</name>
</gene>
<protein>
    <recommendedName>
        <fullName evidence="6">RxLR effector protein PexRD21</fullName>
    </recommendedName>
    <alternativeName>
        <fullName evidence="5">Core RXLR effector 1</fullName>
    </alternativeName>
</protein>
<name>RD21_PHYIT</name>
<dbReference type="EMBL" id="DS028118">
    <property type="protein sequence ID" value="EEY58192.1"/>
    <property type="molecule type" value="Genomic_DNA"/>
</dbReference>
<dbReference type="RefSeq" id="XP_002909378.1">
    <property type="nucleotide sequence ID" value="XM_002909332.1"/>
</dbReference>
<dbReference type="STRING" id="403677.D0MRS3"/>
<dbReference type="EnsemblProtists" id="PITG_00821T0">
    <property type="protein sequence ID" value="PITG_00821T0"/>
    <property type="gene ID" value="PITG_00821"/>
</dbReference>
<dbReference type="GeneID" id="9472690"/>
<dbReference type="KEGG" id="pif:PITG_00821"/>
<dbReference type="VEuPathDB" id="FungiDB:PITG_00821"/>
<dbReference type="eggNOG" id="ENOG502RH31">
    <property type="taxonomic scope" value="Eukaryota"/>
</dbReference>
<dbReference type="HOGENOM" id="CLU_2351196_0_0_1"/>
<dbReference type="InParanoid" id="D0MRS3"/>
<dbReference type="OMA" id="LKKFGHW"/>
<dbReference type="OrthoDB" id="97649at2759"/>
<dbReference type="Proteomes" id="UP000006643">
    <property type="component" value="Partially assembled WGS sequence"/>
</dbReference>
<dbReference type="GO" id="GO:0005576">
    <property type="term" value="C:extracellular region"/>
    <property type="evidence" value="ECO:0007669"/>
    <property type="project" value="UniProtKB-SubCell"/>
</dbReference>
<dbReference type="GO" id="GO:0020002">
    <property type="term" value="C:host cell plasma membrane"/>
    <property type="evidence" value="ECO:0007669"/>
    <property type="project" value="UniProtKB-SubCell"/>
</dbReference>
<dbReference type="GO" id="GO:0016020">
    <property type="term" value="C:membrane"/>
    <property type="evidence" value="ECO:0007669"/>
    <property type="project" value="UniProtKB-KW"/>
</dbReference>
<dbReference type="InterPro" id="IPR031825">
    <property type="entry name" value="RXLR"/>
</dbReference>
<dbReference type="Pfam" id="PF16810">
    <property type="entry name" value="RXLR"/>
    <property type="match status" value="1"/>
</dbReference>
<evidence type="ECO:0000255" key="1"/>
<evidence type="ECO:0000269" key="2">
    <source>
    </source>
</evidence>
<evidence type="ECO:0000269" key="3">
    <source>
    </source>
</evidence>
<evidence type="ECO:0000269" key="4">
    <source>
    </source>
</evidence>
<evidence type="ECO:0000303" key="5">
    <source>
    </source>
</evidence>
<evidence type="ECO:0000303" key="6">
    <source>
    </source>
</evidence>
<evidence type="ECO:0000305" key="7"/>
<evidence type="ECO:0000305" key="8">
    <source>
    </source>
</evidence>
<comment type="function">
    <text evidence="3 4">Effector that is involved in host plant infection. Contributes to virulence during the early infection stage, by inhibiting plant defense responses induced by both PAMP-triggered immunity (PTI) and effector-triggered immunity (ETI).</text>
</comment>
<comment type="subcellular location">
    <subcellularLocation>
        <location evidence="4">Secreted</location>
    </subcellularLocation>
    <subcellularLocation>
        <location evidence="4">Host cell membrane</location>
    </subcellularLocation>
</comment>
<comment type="induction">
    <text evidence="2 3">Expression is induced during host plant infection.</text>
</comment>
<comment type="domain">
    <text evidence="8">The RxLR-dEER motif acts to carry the protein into the host cell cytoplasm through binding to cell surface phosphatidylinositol-3-phosphate.</text>
</comment>
<comment type="similarity">
    <text evidence="7">Belongs to the RxLR effector family.</text>
</comment>
<accession>D0MRS3</accession>
<reference key="1">
    <citation type="journal article" date="2009" name="Nature">
        <title>Genome sequence and analysis of the Irish potato famine pathogen Phytophthora infestans.</title>
        <authorList>
            <consortium name="The Broad Institute Genome Sequencing Platform"/>
            <person name="Haas B.J."/>
            <person name="Kamoun S."/>
            <person name="Zody M.C."/>
            <person name="Jiang R.H."/>
            <person name="Handsaker R.E."/>
            <person name="Cano L.M."/>
            <person name="Grabherr M."/>
            <person name="Kodira C.D."/>
            <person name="Raffaele S."/>
            <person name="Torto-Alalibo T."/>
            <person name="Bozkurt T.O."/>
            <person name="Ah-Fong A.M."/>
            <person name="Alvarado L."/>
            <person name="Anderson V.L."/>
            <person name="Armstrong M.R."/>
            <person name="Avrova A."/>
            <person name="Baxter L."/>
            <person name="Beynon J."/>
            <person name="Boevink P.C."/>
            <person name="Bollmann S.R."/>
            <person name="Bos J.I."/>
            <person name="Bulone V."/>
            <person name="Cai G."/>
            <person name="Cakir C."/>
            <person name="Carrington J.C."/>
            <person name="Chawner M."/>
            <person name="Conti L."/>
            <person name="Costanzo S."/>
            <person name="Ewan R."/>
            <person name="Fahlgren N."/>
            <person name="Fischbach M.A."/>
            <person name="Fugelstad J."/>
            <person name="Gilroy E.M."/>
            <person name="Gnerre S."/>
            <person name="Green P.J."/>
            <person name="Grenville-Briggs L.J."/>
            <person name="Griffith J."/>
            <person name="Grunwald N.J."/>
            <person name="Horn K."/>
            <person name="Horner N.R."/>
            <person name="Hu C.H."/>
            <person name="Huitema E."/>
            <person name="Jeong D.H."/>
            <person name="Jones A.M."/>
            <person name="Jones J.D."/>
            <person name="Jones R.W."/>
            <person name="Karlsson E.K."/>
            <person name="Kunjeti S.G."/>
            <person name="Lamour K."/>
            <person name="Liu Z."/>
            <person name="Ma L."/>
            <person name="Maclean D."/>
            <person name="Chibucos M.C."/>
            <person name="McDonald H."/>
            <person name="McWalters J."/>
            <person name="Meijer H.J."/>
            <person name="Morgan W."/>
            <person name="Morris P.F."/>
            <person name="Munro C.A."/>
            <person name="O'Neill K."/>
            <person name="Ospina-Giraldo M."/>
            <person name="Pinzon A."/>
            <person name="Pritchard L."/>
            <person name="Ramsahoye B."/>
            <person name="Ren Q."/>
            <person name="Restrepo S."/>
            <person name="Roy S."/>
            <person name="Sadanandom A."/>
            <person name="Savidor A."/>
            <person name="Schornack S."/>
            <person name="Schwartz D.C."/>
            <person name="Schumann U.D."/>
            <person name="Schwessinger B."/>
            <person name="Seyer L."/>
            <person name="Sharpe T."/>
            <person name="Silvar C."/>
            <person name="Song J."/>
            <person name="Studholme D.J."/>
            <person name="Sykes S."/>
            <person name="Thines M."/>
            <person name="van de Vondervoort P.J."/>
            <person name="Phuntumart V."/>
            <person name="Wawra S."/>
            <person name="Weide R."/>
            <person name="Win J."/>
            <person name="Young C."/>
            <person name="Zhou S."/>
            <person name="Fry W."/>
            <person name="Meyers B.C."/>
            <person name="van West P."/>
            <person name="Ristaino J."/>
            <person name="Govers F."/>
            <person name="Birch P.R."/>
            <person name="Whisson S.C."/>
            <person name="Judelson H.S."/>
            <person name="Nusbaum C."/>
        </authorList>
    </citation>
    <scope>NUCLEOTIDE SEQUENCE [LARGE SCALE GENOMIC DNA]</scope>
    <source>
        <strain>T30-4</strain>
    </source>
</reference>
<reference key="2">
    <citation type="journal article" date="2017" name="BMC Genomics">
        <title>RNA-seq of life stages of the oomycete Phytophthora infestans reveals dynamic changes in metabolic, signal transduction, and pathogenesis genes and a major role for calcium signaling in development.</title>
        <authorList>
            <person name="Ah-Fong A.M."/>
            <person name="Kim K.S."/>
            <person name="Judelson H.S."/>
        </authorList>
    </citation>
    <scope>INDUCTION</scope>
</reference>
<reference key="3">
    <citation type="journal article" date="2017" name="Front. Plant Sci.">
        <title>Conserved RXLR effector genes of Phytophthora infestans expressed at the early stage of potato infection are suppressive to host defense.</title>
        <authorList>
            <person name="Yin J."/>
            <person name="Gu B."/>
            <person name="Huang G."/>
            <person name="Tian Y."/>
            <person name="Quan J."/>
            <person name="Lindqvist-Kreuze H."/>
            <person name="Shan W."/>
        </authorList>
    </citation>
    <scope>INDUCTION</scope>
    <scope>FUNCTION</scope>
    <scope>DOMAIN</scope>
</reference>
<reference key="4">
    <citation type="journal article" date="2019" name="J. Exp. Bot.">
        <title>Phytophthora infestans RXLR effectors act in concert at diverse subcellular locations to enhance host colonization.</title>
        <authorList>
            <person name="Wang S."/>
            <person name="McLellan H."/>
            <person name="Bukharova T."/>
            <person name="He Q."/>
            <person name="Murphy F."/>
            <person name="Shi J."/>
            <person name="Sun S."/>
            <person name="van Weymers P."/>
            <person name="Ren Y."/>
            <person name="Thilliez G."/>
            <person name="Wang H."/>
            <person name="Chen X."/>
            <person name="Engelhardt S."/>
            <person name="Vleeshouwers V."/>
            <person name="Gilroy E.M."/>
            <person name="Whisson S.C."/>
            <person name="Hein I."/>
            <person name="Wang X."/>
            <person name="Tian Z."/>
            <person name="Birch P.R.J."/>
            <person name="Boevink P.C."/>
        </authorList>
    </citation>
    <scope>FUNCTION</scope>
    <scope>SUBCELLULAR LOCATION</scope>
</reference>
<proteinExistence type="evidence at transcript level"/>
<keyword id="KW-1032">Host cell membrane</keyword>
<keyword id="KW-1043">Host membrane</keyword>
<keyword id="KW-0472">Membrane</keyword>
<keyword id="KW-1185">Reference proteome</keyword>
<keyword id="KW-0964">Secreted</keyword>
<keyword id="KW-0732">Signal</keyword>
<keyword id="KW-0843">Virulence</keyword>
<organism>
    <name type="scientific">Phytophthora infestans (strain T30-4)</name>
    <name type="common">Potato late blight agent</name>
    <dbReference type="NCBI Taxonomy" id="403677"/>
    <lineage>
        <taxon>Eukaryota</taxon>
        <taxon>Sar</taxon>
        <taxon>Stramenopiles</taxon>
        <taxon>Oomycota</taxon>
        <taxon>Peronosporales</taxon>
        <taxon>Peronosporaceae</taxon>
        <taxon>Phytophthora</taxon>
    </lineage>
</organism>
<sequence>MRLSYILVVVIAVTLQACVCATPVIKEANQAMLANGPLPSIVNTEGGRLLRGVKKRTAEREVQEERMSGAKLSEKGKQFLKWFFRGSDTRVKGRSWR</sequence>
<feature type="signal peptide" evidence="1">
    <location>
        <begin position="1"/>
        <end position="21"/>
    </location>
</feature>
<feature type="chain" id="PRO_5003011799" description="RxLR effector protein PexRD21">
    <location>
        <begin position="22"/>
        <end position="97"/>
    </location>
</feature>
<feature type="short sequence motif" description="RxLR-dEER" evidence="8">
    <location>
        <begin position="48"/>
        <end position="66"/>
    </location>
</feature>